<proteinExistence type="inferred from homology"/>
<accession>B3H0M9</accession>
<keyword id="KW-0143">Chaperone</keyword>
<keyword id="KW-0963">Cytoplasm</keyword>
<keyword id="KW-0346">Stress response</keyword>
<gene>
    <name evidence="1" type="primary">grpE</name>
    <name type="ordered locus">APP7_0389</name>
</gene>
<evidence type="ECO:0000255" key="1">
    <source>
        <dbReference type="HAMAP-Rule" id="MF_01151"/>
    </source>
</evidence>
<dbReference type="EMBL" id="CP001091">
    <property type="protein sequence ID" value="ACE61041.1"/>
    <property type="molecule type" value="Genomic_DNA"/>
</dbReference>
<dbReference type="RefSeq" id="WP_005614610.1">
    <property type="nucleotide sequence ID" value="NC_010939.1"/>
</dbReference>
<dbReference type="SMR" id="B3H0M9"/>
<dbReference type="KEGG" id="apa:APP7_0389"/>
<dbReference type="HOGENOM" id="CLU_057217_6_0_6"/>
<dbReference type="Proteomes" id="UP000001226">
    <property type="component" value="Chromosome"/>
</dbReference>
<dbReference type="GO" id="GO:0005829">
    <property type="term" value="C:cytosol"/>
    <property type="evidence" value="ECO:0007669"/>
    <property type="project" value="TreeGrafter"/>
</dbReference>
<dbReference type="GO" id="GO:0000774">
    <property type="term" value="F:adenyl-nucleotide exchange factor activity"/>
    <property type="evidence" value="ECO:0007669"/>
    <property type="project" value="InterPro"/>
</dbReference>
<dbReference type="GO" id="GO:0042803">
    <property type="term" value="F:protein homodimerization activity"/>
    <property type="evidence" value="ECO:0007669"/>
    <property type="project" value="InterPro"/>
</dbReference>
<dbReference type="GO" id="GO:0051087">
    <property type="term" value="F:protein-folding chaperone binding"/>
    <property type="evidence" value="ECO:0007669"/>
    <property type="project" value="InterPro"/>
</dbReference>
<dbReference type="GO" id="GO:0051082">
    <property type="term" value="F:unfolded protein binding"/>
    <property type="evidence" value="ECO:0007669"/>
    <property type="project" value="TreeGrafter"/>
</dbReference>
<dbReference type="GO" id="GO:0006457">
    <property type="term" value="P:protein folding"/>
    <property type="evidence" value="ECO:0007669"/>
    <property type="project" value="InterPro"/>
</dbReference>
<dbReference type="CDD" id="cd00446">
    <property type="entry name" value="GrpE"/>
    <property type="match status" value="1"/>
</dbReference>
<dbReference type="FunFam" id="2.30.22.10:FF:000001">
    <property type="entry name" value="Protein GrpE"/>
    <property type="match status" value="1"/>
</dbReference>
<dbReference type="Gene3D" id="3.90.20.20">
    <property type="match status" value="1"/>
</dbReference>
<dbReference type="Gene3D" id="2.30.22.10">
    <property type="entry name" value="Head domain of nucleotide exchange factor GrpE"/>
    <property type="match status" value="1"/>
</dbReference>
<dbReference type="HAMAP" id="MF_01151">
    <property type="entry name" value="GrpE"/>
    <property type="match status" value="1"/>
</dbReference>
<dbReference type="InterPro" id="IPR000740">
    <property type="entry name" value="GrpE"/>
</dbReference>
<dbReference type="InterPro" id="IPR013805">
    <property type="entry name" value="GrpE_coiled_coil"/>
</dbReference>
<dbReference type="InterPro" id="IPR009012">
    <property type="entry name" value="GrpE_head"/>
</dbReference>
<dbReference type="NCBIfam" id="NF010738">
    <property type="entry name" value="PRK14140.1"/>
    <property type="match status" value="1"/>
</dbReference>
<dbReference type="NCBIfam" id="NF010748">
    <property type="entry name" value="PRK14150.1"/>
    <property type="match status" value="1"/>
</dbReference>
<dbReference type="PANTHER" id="PTHR21237">
    <property type="entry name" value="GRPE PROTEIN"/>
    <property type="match status" value="1"/>
</dbReference>
<dbReference type="PANTHER" id="PTHR21237:SF23">
    <property type="entry name" value="GRPE PROTEIN HOMOLOG, MITOCHONDRIAL"/>
    <property type="match status" value="1"/>
</dbReference>
<dbReference type="Pfam" id="PF01025">
    <property type="entry name" value="GrpE"/>
    <property type="match status" value="1"/>
</dbReference>
<dbReference type="PRINTS" id="PR00773">
    <property type="entry name" value="GRPEPROTEIN"/>
</dbReference>
<dbReference type="SUPFAM" id="SSF58014">
    <property type="entry name" value="Coiled-coil domain of nucleotide exchange factor GrpE"/>
    <property type="match status" value="1"/>
</dbReference>
<dbReference type="SUPFAM" id="SSF51064">
    <property type="entry name" value="Head domain of nucleotide exchange factor GrpE"/>
    <property type="match status" value="1"/>
</dbReference>
<dbReference type="PROSITE" id="PS01071">
    <property type="entry name" value="GRPE"/>
    <property type="match status" value="1"/>
</dbReference>
<comment type="function">
    <text evidence="1">Participates actively in the response to hyperosmotic and heat shock by preventing the aggregation of stress-denatured proteins, in association with DnaK and GrpE. It is the nucleotide exchange factor for DnaK and may function as a thermosensor. Unfolded proteins bind initially to DnaJ; upon interaction with the DnaJ-bound protein, DnaK hydrolyzes its bound ATP, resulting in the formation of a stable complex. GrpE releases ADP from DnaK; ATP binding to DnaK triggers the release of the substrate protein, thus completing the reaction cycle. Several rounds of ATP-dependent interactions between DnaJ, DnaK and GrpE are required for fully efficient folding.</text>
</comment>
<comment type="subunit">
    <text evidence="1">Homodimer.</text>
</comment>
<comment type="subcellular location">
    <subcellularLocation>
        <location evidence="1">Cytoplasm</location>
    </subcellularLocation>
</comment>
<comment type="similarity">
    <text evidence="1">Belongs to the GrpE family.</text>
</comment>
<feature type="chain" id="PRO_1000137530" description="Protein GrpE">
    <location>
        <begin position="1"/>
        <end position="198"/>
    </location>
</feature>
<sequence length="198" mass="21839">MTAQNENAQAQAEQVEVANEAQLEQTAEVQQEQPVEAELAAAYARINELETYVAEADNREKDIQLRAQAEIQNIRRRAEQDIEKAHKFALEKFSKELLTVVDNLERGLNALDTAVTDEKTQALVDGVEMTHKEFISTLAKFGVEAVGVVGEAFNPEVHEAISMQPAEGIEANHISVVLQKGYTLQGRVLRPAMVMVAG</sequence>
<name>GRPE_ACTP7</name>
<organism>
    <name type="scientific">Actinobacillus pleuropneumoniae serotype 7 (strain AP76)</name>
    <dbReference type="NCBI Taxonomy" id="537457"/>
    <lineage>
        <taxon>Bacteria</taxon>
        <taxon>Pseudomonadati</taxon>
        <taxon>Pseudomonadota</taxon>
        <taxon>Gammaproteobacteria</taxon>
        <taxon>Pasteurellales</taxon>
        <taxon>Pasteurellaceae</taxon>
        <taxon>Actinobacillus</taxon>
    </lineage>
</organism>
<reference key="1">
    <citation type="submission" date="2008-06" db="EMBL/GenBank/DDBJ databases">
        <title>Genome and proteome analysis of A. pleuropneumoniae serotype 7.</title>
        <authorList>
            <person name="Linke B."/>
            <person name="Buettner F."/>
            <person name="Martinez-Arias R."/>
            <person name="Goesmann A."/>
            <person name="Baltes N."/>
            <person name="Tegetmeyer H."/>
            <person name="Singh M."/>
            <person name="Gerlach G.F."/>
        </authorList>
    </citation>
    <scope>NUCLEOTIDE SEQUENCE [LARGE SCALE GENOMIC DNA]</scope>
    <source>
        <strain>AP76</strain>
    </source>
</reference>
<protein>
    <recommendedName>
        <fullName evidence="1">Protein GrpE</fullName>
    </recommendedName>
    <alternativeName>
        <fullName evidence="1">HSP-70 cofactor</fullName>
    </alternativeName>
</protein>